<protein>
    <recommendedName>
        <fullName evidence="1">Ribosome maturation factor RimM</fullName>
    </recommendedName>
</protein>
<feature type="chain" id="PRO_0000321726" description="Ribosome maturation factor RimM">
    <location>
        <begin position="1"/>
        <end position="169"/>
    </location>
</feature>
<feature type="domain" description="PRC barrel" evidence="1">
    <location>
        <begin position="91"/>
        <end position="167"/>
    </location>
</feature>
<dbReference type="EMBL" id="CP000157">
    <property type="protein sequence ID" value="ABC63586.1"/>
    <property type="molecule type" value="Genomic_DNA"/>
</dbReference>
<dbReference type="RefSeq" id="WP_011414420.1">
    <property type="nucleotide sequence ID" value="NC_007722.1"/>
</dbReference>
<dbReference type="SMR" id="Q2N9Q5"/>
<dbReference type="STRING" id="314225.ELI_07470"/>
<dbReference type="KEGG" id="eli:ELI_07470"/>
<dbReference type="eggNOG" id="COG0806">
    <property type="taxonomic scope" value="Bacteria"/>
</dbReference>
<dbReference type="HOGENOM" id="CLU_077636_0_1_5"/>
<dbReference type="OrthoDB" id="9788191at2"/>
<dbReference type="Proteomes" id="UP000008808">
    <property type="component" value="Chromosome"/>
</dbReference>
<dbReference type="GO" id="GO:0005737">
    <property type="term" value="C:cytoplasm"/>
    <property type="evidence" value="ECO:0007669"/>
    <property type="project" value="UniProtKB-SubCell"/>
</dbReference>
<dbReference type="GO" id="GO:0005840">
    <property type="term" value="C:ribosome"/>
    <property type="evidence" value="ECO:0007669"/>
    <property type="project" value="InterPro"/>
</dbReference>
<dbReference type="GO" id="GO:0043022">
    <property type="term" value="F:ribosome binding"/>
    <property type="evidence" value="ECO:0007669"/>
    <property type="project" value="InterPro"/>
</dbReference>
<dbReference type="GO" id="GO:0042274">
    <property type="term" value="P:ribosomal small subunit biogenesis"/>
    <property type="evidence" value="ECO:0007669"/>
    <property type="project" value="UniProtKB-UniRule"/>
</dbReference>
<dbReference type="GO" id="GO:0006364">
    <property type="term" value="P:rRNA processing"/>
    <property type="evidence" value="ECO:0007669"/>
    <property type="project" value="UniProtKB-UniRule"/>
</dbReference>
<dbReference type="Gene3D" id="2.30.30.240">
    <property type="entry name" value="PRC-barrel domain"/>
    <property type="match status" value="1"/>
</dbReference>
<dbReference type="Gene3D" id="2.40.30.60">
    <property type="entry name" value="RimM"/>
    <property type="match status" value="1"/>
</dbReference>
<dbReference type="HAMAP" id="MF_00014">
    <property type="entry name" value="Ribosome_mat_RimM"/>
    <property type="match status" value="1"/>
</dbReference>
<dbReference type="InterPro" id="IPR027275">
    <property type="entry name" value="PRC-brl_dom"/>
</dbReference>
<dbReference type="InterPro" id="IPR011033">
    <property type="entry name" value="PRC_barrel-like_sf"/>
</dbReference>
<dbReference type="InterPro" id="IPR011961">
    <property type="entry name" value="RimM"/>
</dbReference>
<dbReference type="InterPro" id="IPR002676">
    <property type="entry name" value="RimM_N"/>
</dbReference>
<dbReference type="InterPro" id="IPR036976">
    <property type="entry name" value="RimM_N_sf"/>
</dbReference>
<dbReference type="InterPro" id="IPR009000">
    <property type="entry name" value="Transl_B-barrel_sf"/>
</dbReference>
<dbReference type="NCBIfam" id="TIGR02273">
    <property type="entry name" value="16S_RimM"/>
    <property type="match status" value="1"/>
</dbReference>
<dbReference type="PANTHER" id="PTHR33692">
    <property type="entry name" value="RIBOSOME MATURATION FACTOR RIMM"/>
    <property type="match status" value="1"/>
</dbReference>
<dbReference type="PANTHER" id="PTHR33692:SF1">
    <property type="entry name" value="RIBOSOME MATURATION FACTOR RIMM"/>
    <property type="match status" value="1"/>
</dbReference>
<dbReference type="Pfam" id="PF05239">
    <property type="entry name" value="PRC"/>
    <property type="match status" value="1"/>
</dbReference>
<dbReference type="Pfam" id="PF01782">
    <property type="entry name" value="RimM"/>
    <property type="match status" value="1"/>
</dbReference>
<dbReference type="SUPFAM" id="SSF50346">
    <property type="entry name" value="PRC-barrel domain"/>
    <property type="match status" value="1"/>
</dbReference>
<dbReference type="SUPFAM" id="SSF50447">
    <property type="entry name" value="Translation proteins"/>
    <property type="match status" value="1"/>
</dbReference>
<proteinExistence type="inferred from homology"/>
<name>RIMM_ERYLH</name>
<comment type="function">
    <text evidence="1">An accessory protein needed during the final step in the assembly of 30S ribosomal subunit, possibly for assembly of the head region. Essential for efficient processing of 16S rRNA. May be needed both before and after RbfA during the maturation of 16S rRNA. It has affinity for free ribosomal 30S subunits but not for 70S ribosomes.</text>
</comment>
<comment type="subunit">
    <text evidence="1">Binds ribosomal protein uS19.</text>
</comment>
<comment type="subcellular location">
    <subcellularLocation>
        <location evidence="1">Cytoplasm</location>
    </subcellularLocation>
</comment>
<comment type="domain">
    <text evidence="1">The PRC barrel domain binds ribosomal protein uS19.</text>
</comment>
<comment type="similarity">
    <text evidence="1">Belongs to the RimM family.</text>
</comment>
<sequence>MTDNTPLTLAAITGAHGVRGDVRLKLLGEGLEALKAHSSFNEGTLTLKSVRSDNKGGAIARFAEVQGREQAEKLRGTTLTVPREALPPLEEGEYYFADLIGLDAVTDAGKRVGKVIDVHNYGATDIVEIAKDPVPEKGMKTFMVPMTTHAVVEWNGERIVIATDFAHPD</sequence>
<gene>
    <name evidence="1" type="primary">rimM</name>
    <name type="ordered locus">ELI_07470</name>
</gene>
<evidence type="ECO:0000255" key="1">
    <source>
        <dbReference type="HAMAP-Rule" id="MF_00014"/>
    </source>
</evidence>
<organism>
    <name type="scientific">Erythrobacter litoralis (strain HTCC2594)</name>
    <dbReference type="NCBI Taxonomy" id="314225"/>
    <lineage>
        <taxon>Bacteria</taxon>
        <taxon>Pseudomonadati</taxon>
        <taxon>Pseudomonadota</taxon>
        <taxon>Alphaproteobacteria</taxon>
        <taxon>Sphingomonadales</taxon>
        <taxon>Erythrobacteraceae</taxon>
        <taxon>Erythrobacter/Porphyrobacter group</taxon>
        <taxon>Erythrobacter</taxon>
    </lineage>
</organism>
<reference key="1">
    <citation type="journal article" date="2009" name="J. Bacteriol.">
        <title>Complete genome sequence of Erythrobacter litoralis HTCC2594.</title>
        <authorList>
            <person name="Oh H.M."/>
            <person name="Giovannoni S.J."/>
            <person name="Ferriera S."/>
            <person name="Johnson J."/>
            <person name="Cho J.C."/>
        </authorList>
    </citation>
    <scope>NUCLEOTIDE SEQUENCE [LARGE SCALE GENOMIC DNA]</scope>
    <source>
        <strain>HTCC2594</strain>
    </source>
</reference>
<accession>Q2N9Q5</accession>
<keyword id="KW-0143">Chaperone</keyword>
<keyword id="KW-0963">Cytoplasm</keyword>
<keyword id="KW-1185">Reference proteome</keyword>
<keyword id="KW-0690">Ribosome biogenesis</keyword>
<keyword id="KW-0698">rRNA processing</keyword>